<sequence length="85" mass="9069">MAHKKGVGSSRNGRDSNPKYLGVKLFGGQAIEAGNIIIRQRGTQFHAGDGVGLGRDHTLFALVNGTVEFSIKGPKKRRTVNVIPA</sequence>
<protein>
    <recommendedName>
        <fullName evidence="1">Large ribosomal subunit protein bL27</fullName>
    </recommendedName>
    <alternativeName>
        <fullName evidence="2">50S ribosomal protein L27</fullName>
    </alternativeName>
</protein>
<feature type="chain" id="PRO_0000181212" description="Large ribosomal subunit protein bL27">
    <location>
        <begin position="1"/>
        <end position="85"/>
    </location>
</feature>
<keyword id="KW-1185">Reference proteome</keyword>
<keyword id="KW-0687">Ribonucleoprotein</keyword>
<keyword id="KW-0689">Ribosomal protein</keyword>
<reference key="1">
    <citation type="journal article" date="2003" name="J. Bacteriol.">
        <title>Comparative analyses of the complete genome sequences of Pierce's disease and citrus variegated chlorosis strains of Xylella fastidiosa.</title>
        <authorList>
            <person name="Van Sluys M.A."/>
            <person name="de Oliveira M.C."/>
            <person name="Monteiro-Vitorello C.B."/>
            <person name="Miyaki C.Y."/>
            <person name="Furlan L.R."/>
            <person name="Camargo L.E.A."/>
            <person name="da Silva A.C.R."/>
            <person name="Moon D.H."/>
            <person name="Takita M.A."/>
            <person name="Lemos E.G.M."/>
            <person name="Machado M.A."/>
            <person name="Ferro M.I.T."/>
            <person name="da Silva F.R."/>
            <person name="Goldman M.H.S."/>
            <person name="Goldman G.H."/>
            <person name="Lemos M.V.F."/>
            <person name="El-Dorry H."/>
            <person name="Tsai S.M."/>
            <person name="Carrer H."/>
            <person name="Carraro D.M."/>
            <person name="de Oliveira R.C."/>
            <person name="Nunes L.R."/>
            <person name="Siqueira W.J."/>
            <person name="Coutinho L.L."/>
            <person name="Kimura E.T."/>
            <person name="Ferro E.S."/>
            <person name="Harakava R."/>
            <person name="Kuramae E.E."/>
            <person name="Marino C.L."/>
            <person name="Giglioti E."/>
            <person name="Abreu I.L."/>
            <person name="Alves L.M.C."/>
            <person name="do Amaral A.M."/>
            <person name="Baia G.S."/>
            <person name="Blanco S.R."/>
            <person name="Brito M.S."/>
            <person name="Cannavan F.S."/>
            <person name="Celestino A.V."/>
            <person name="da Cunha A.F."/>
            <person name="Fenille R.C."/>
            <person name="Ferro J.A."/>
            <person name="Formighieri E.F."/>
            <person name="Kishi L.T."/>
            <person name="Leoni S.G."/>
            <person name="Oliveira A.R."/>
            <person name="Rosa V.E. Jr."/>
            <person name="Sassaki F.T."/>
            <person name="Sena J.A.D."/>
            <person name="de Souza A.A."/>
            <person name="Truffi D."/>
            <person name="Tsukumo F."/>
            <person name="Yanai G.M."/>
            <person name="Zaros L.G."/>
            <person name="Civerolo E.L."/>
            <person name="Simpson A.J.G."/>
            <person name="Almeida N.F. Jr."/>
            <person name="Setubal J.C."/>
            <person name="Kitajima J.P."/>
        </authorList>
    </citation>
    <scope>NUCLEOTIDE SEQUENCE [LARGE SCALE GENOMIC DNA]</scope>
    <source>
        <strain>Temecula1 / ATCC 700964</strain>
    </source>
</reference>
<organism>
    <name type="scientific">Xylella fastidiosa (strain Temecula1 / ATCC 700964)</name>
    <dbReference type="NCBI Taxonomy" id="183190"/>
    <lineage>
        <taxon>Bacteria</taxon>
        <taxon>Pseudomonadati</taxon>
        <taxon>Pseudomonadota</taxon>
        <taxon>Gammaproteobacteria</taxon>
        <taxon>Lysobacterales</taxon>
        <taxon>Lysobacteraceae</taxon>
        <taxon>Xylella</taxon>
    </lineage>
</organism>
<proteinExistence type="inferred from homology"/>
<accession>Q87BL1</accession>
<evidence type="ECO:0000255" key="1">
    <source>
        <dbReference type="HAMAP-Rule" id="MF_00539"/>
    </source>
</evidence>
<evidence type="ECO:0000305" key="2"/>
<dbReference type="EMBL" id="AE009442">
    <property type="protein sequence ID" value="AAO29286.1"/>
    <property type="molecule type" value="Genomic_DNA"/>
</dbReference>
<dbReference type="RefSeq" id="WP_004085949.1">
    <property type="nucleotide sequence ID" value="NC_004556.1"/>
</dbReference>
<dbReference type="SMR" id="Q87BL1"/>
<dbReference type="GeneID" id="93905263"/>
<dbReference type="KEGG" id="xft:PD_1442"/>
<dbReference type="HOGENOM" id="CLU_095424_4_0_6"/>
<dbReference type="Proteomes" id="UP000002516">
    <property type="component" value="Chromosome"/>
</dbReference>
<dbReference type="GO" id="GO:0022625">
    <property type="term" value="C:cytosolic large ribosomal subunit"/>
    <property type="evidence" value="ECO:0007669"/>
    <property type="project" value="TreeGrafter"/>
</dbReference>
<dbReference type="GO" id="GO:0003735">
    <property type="term" value="F:structural constituent of ribosome"/>
    <property type="evidence" value="ECO:0007669"/>
    <property type="project" value="InterPro"/>
</dbReference>
<dbReference type="GO" id="GO:0006412">
    <property type="term" value="P:translation"/>
    <property type="evidence" value="ECO:0007669"/>
    <property type="project" value="UniProtKB-UniRule"/>
</dbReference>
<dbReference type="FunFam" id="2.40.50.100:FF:000020">
    <property type="entry name" value="50S ribosomal protein L27"/>
    <property type="match status" value="1"/>
</dbReference>
<dbReference type="Gene3D" id="2.40.50.100">
    <property type="match status" value="1"/>
</dbReference>
<dbReference type="HAMAP" id="MF_00539">
    <property type="entry name" value="Ribosomal_bL27"/>
    <property type="match status" value="1"/>
</dbReference>
<dbReference type="InterPro" id="IPR001684">
    <property type="entry name" value="Ribosomal_bL27"/>
</dbReference>
<dbReference type="InterPro" id="IPR018261">
    <property type="entry name" value="Ribosomal_bL27_CS"/>
</dbReference>
<dbReference type="NCBIfam" id="TIGR00062">
    <property type="entry name" value="L27"/>
    <property type="match status" value="1"/>
</dbReference>
<dbReference type="PANTHER" id="PTHR15893:SF0">
    <property type="entry name" value="LARGE RIBOSOMAL SUBUNIT PROTEIN BL27M"/>
    <property type="match status" value="1"/>
</dbReference>
<dbReference type="PANTHER" id="PTHR15893">
    <property type="entry name" value="RIBOSOMAL PROTEIN L27"/>
    <property type="match status" value="1"/>
</dbReference>
<dbReference type="Pfam" id="PF01016">
    <property type="entry name" value="Ribosomal_L27"/>
    <property type="match status" value="1"/>
</dbReference>
<dbReference type="PRINTS" id="PR00063">
    <property type="entry name" value="RIBOSOMALL27"/>
</dbReference>
<dbReference type="SUPFAM" id="SSF110324">
    <property type="entry name" value="Ribosomal L27 protein-like"/>
    <property type="match status" value="1"/>
</dbReference>
<dbReference type="PROSITE" id="PS00831">
    <property type="entry name" value="RIBOSOMAL_L27"/>
    <property type="match status" value="1"/>
</dbReference>
<name>RL27_XYLFT</name>
<comment type="similarity">
    <text evidence="1">Belongs to the bacterial ribosomal protein bL27 family.</text>
</comment>
<gene>
    <name evidence="1" type="primary">rpmA</name>
    <name type="ordered locus">PD_1442</name>
</gene>